<protein>
    <recommendedName>
        <fullName>Alpha-defensin-related sequence 2</fullName>
    </recommendedName>
    <alternativeName>
        <fullName>CRS4C1</fullName>
    </alternativeName>
    <alternativeName>
        <fullName>Cryptdin-related protein 4C-1</fullName>
    </alternativeName>
    <alternativeName>
        <fullName>Defensin-related cryptdin-related sequence 2</fullName>
    </alternativeName>
</protein>
<name>DFAR2_MOUSE</name>
<organism>
    <name type="scientific">Mus musculus</name>
    <name type="common">Mouse</name>
    <dbReference type="NCBI Taxonomy" id="10090"/>
    <lineage>
        <taxon>Eukaryota</taxon>
        <taxon>Metazoa</taxon>
        <taxon>Chordata</taxon>
        <taxon>Craniata</taxon>
        <taxon>Vertebrata</taxon>
        <taxon>Euteleostomi</taxon>
        <taxon>Mammalia</taxon>
        <taxon>Eutheria</taxon>
        <taxon>Euarchontoglires</taxon>
        <taxon>Glires</taxon>
        <taxon>Rodentia</taxon>
        <taxon>Myomorpha</taxon>
        <taxon>Muroidea</taxon>
        <taxon>Muridae</taxon>
        <taxon>Murinae</taxon>
        <taxon>Mus</taxon>
        <taxon>Mus</taxon>
    </lineage>
</organism>
<keyword id="KW-0929">Antimicrobial</keyword>
<keyword id="KW-0211">Defensin</keyword>
<keyword id="KW-1185">Reference proteome</keyword>
<keyword id="KW-0677">Repeat</keyword>
<keyword id="KW-0964">Secreted</keyword>
<keyword id="KW-0732">Signal</keyword>
<accession>P17534</accession>
<accession>Q64111</accession>
<proteinExistence type="evidence at transcript level"/>
<dbReference type="EMBL" id="M33227">
    <property type="protein sequence ID" value="AAA18210.1"/>
    <property type="status" value="ALT_SEQ"/>
    <property type="molecule type" value="mRNA"/>
</dbReference>
<dbReference type="EMBL" id="S77668">
    <property type="protein sequence ID" value="AAB33829.1"/>
    <property type="molecule type" value="mRNA"/>
</dbReference>
<dbReference type="PIR" id="A59002">
    <property type="entry name" value="A59002"/>
</dbReference>
<dbReference type="RefSeq" id="NP_031873.1">
    <property type="nucleotide sequence ID" value="NM_007847.1"/>
</dbReference>
<dbReference type="SMR" id="P17534"/>
<dbReference type="FunCoup" id="P17534">
    <property type="interactions" value="10"/>
</dbReference>
<dbReference type="GeneID" id="13222"/>
<dbReference type="KEGG" id="mmu:13222"/>
<dbReference type="AGR" id="MGI:99592"/>
<dbReference type="CTD" id="13222"/>
<dbReference type="MGI" id="MGI:99592">
    <property type="gene designation" value="Defa-rs2"/>
</dbReference>
<dbReference type="InParanoid" id="P17534"/>
<dbReference type="PhylomeDB" id="P17534"/>
<dbReference type="PRO" id="PR:P17534"/>
<dbReference type="Proteomes" id="UP000000589">
    <property type="component" value="Unplaced"/>
</dbReference>
<dbReference type="RNAct" id="P17534">
    <property type="molecule type" value="protein"/>
</dbReference>
<dbReference type="GO" id="GO:0005615">
    <property type="term" value="C:extracellular space"/>
    <property type="evidence" value="ECO:0007669"/>
    <property type="project" value="InterPro"/>
</dbReference>
<dbReference type="GO" id="GO:0030141">
    <property type="term" value="C:secretory granule"/>
    <property type="evidence" value="ECO:0000314"/>
    <property type="project" value="MGI"/>
</dbReference>
<dbReference type="GO" id="GO:0042742">
    <property type="term" value="P:defense response to bacterium"/>
    <property type="evidence" value="ECO:0000314"/>
    <property type="project" value="MGI"/>
</dbReference>
<dbReference type="GO" id="GO:0051673">
    <property type="term" value="P:disruption of plasma membrane integrity in another organism"/>
    <property type="evidence" value="ECO:0000314"/>
    <property type="project" value="MGI"/>
</dbReference>
<dbReference type="InterPro" id="IPR016327">
    <property type="entry name" value="Alpha-defensin"/>
</dbReference>
<dbReference type="InterPro" id="IPR002366">
    <property type="entry name" value="Alpha-defensin_N"/>
</dbReference>
<dbReference type="PANTHER" id="PTHR11876">
    <property type="entry name" value="ALPHA-DEFENSIN 1"/>
    <property type="match status" value="1"/>
</dbReference>
<dbReference type="PANTHER" id="PTHR11876:SF2">
    <property type="entry name" value="ALPHA-DEFENSIN 1-RELATED"/>
    <property type="match status" value="1"/>
</dbReference>
<dbReference type="Pfam" id="PF00879">
    <property type="entry name" value="Defensin_propep"/>
    <property type="match status" value="1"/>
</dbReference>
<dbReference type="PIRSF" id="PIRSF001875">
    <property type="entry name" value="Alpha-defensin"/>
    <property type="match status" value="1"/>
</dbReference>
<dbReference type="SMART" id="SM01418">
    <property type="entry name" value="Defensin_propep"/>
    <property type="match status" value="1"/>
</dbReference>
<reference key="1">
    <citation type="journal article" date="1990" name="J. Biol. Chem.">
        <title>A novel mouse gene family coding for cationic, cysteine-rich peptides. Regulation in small intestine and cells of myeloid origin.</title>
        <authorList>
            <person name="Ouellette A.J."/>
            <person name="Lauldi J.C."/>
        </authorList>
    </citation>
    <scope>NUCLEOTIDE SEQUENCE [MRNA]</scope>
    <source>
        <strain>CD-1</strain>
        <tissue>Small intestine</tissue>
    </source>
</reference>
<reference key="2">
    <citation type="journal article" date="1994" name="J. Biol. Chem.">
        <authorList>
            <person name="Ouellette A.J."/>
            <person name="Lauldi J.C."/>
        </authorList>
    </citation>
    <scope>ERRATUM OF PUBMED:2351676</scope>
    <scope>SEQUENCE REVISION</scope>
</reference>
<reference key="3">
    <citation type="journal article" date="1994" name="Genomics">
        <title>A family of defensin-like genes codes for diverse cysteine-rich peptides in mouse Paneth cells.</title>
        <authorList>
            <person name="Huttner K.M."/>
            <person name="Ouellette A.J."/>
        </authorList>
    </citation>
    <scope>NUCLEOTIDE SEQUENCE [MRNA]</scope>
    <source>
        <strain>129/SvJ</strain>
        <tissue>Small intestine</tissue>
    </source>
</reference>
<feature type="signal peptide" evidence="1">
    <location>
        <begin position="1"/>
        <end position="19"/>
    </location>
</feature>
<feature type="propeptide" id="PRO_0000006851" evidence="1">
    <location>
        <begin position="20"/>
        <end position="58"/>
    </location>
</feature>
<feature type="peptide" id="PRO_0000006852" description="Alpha-defensin-related sequence 2">
    <location>
        <begin position="59"/>
        <end position="91"/>
    </location>
</feature>
<feature type="repeat" description="1">
    <location>
        <begin position="65"/>
        <end position="67"/>
    </location>
</feature>
<feature type="repeat" description="2">
    <location>
        <begin position="68"/>
        <end position="70"/>
    </location>
</feature>
<feature type="repeat" description="3">
    <location>
        <begin position="71"/>
        <end position="73"/>
    </location>
</feature>
<feature type="repeat" description="4">
    <location>
        <begin position="74"/>
        <end position="76"/>
    </location>
</feature>
<feature type="repeat" description="5">
    <location>
        <begin position="77"/>
        <end position="79"/>
    </location>
</feature>
<feature type="repeat" description="6">
    <location>
        <begin position="80"/>
        <end position="82"/>
    </location>
</feature>
<feature type="repeat" description="7">
    <location>
        <begin position="83"/>
        <end position="85"/>
    </location>
</feature>
<feature type="region of interest" description="Disordered" evidence="2">
    <location>
        <begin position="22"/>
        <end position="48"/>
    </location>
</feature>
<feature type="region of interest" description="7 X 3 AA tandem repeats of C-P-X">
    <location>
        <begin position="65"/>
        <end position="85"/>
    </location>
</feature>
<feature type="compositionally biased region" description="Basic and acidic residues" evidence="2">
    <location>
        <begin position="27"/>
        <end position="40"/>
    </location>
</feature>
<gene>
    <name type="primary">Defa-rs2</name>
    <name type="synonym">Defcr-rs2</name>
</gene>
<evidence type="ECO:0000255" key="1"/>
<evidence type="ECO:0000256" key="2">
    <source>
        <dbReference type="SAM" id="MobiDB-lite"/>
    </source>
</evidence>
<evidence type="ECO:0000305" key="3"/>
<sequence>MKKLVLLFALVLLAFQVQADSIQNTDEETKTEEQPGEKDQAVSVSFGDPQGSALQDAALGWGRRCPQCPRCPSCPSCPRCPRCPRCKCNPK</sequence>
<comment type="function">
    <text>Apparent precursor of a secreted, cationic, proline- and cysteine-rich peptide that contains Cys-Pro-Xaa repeats. Unlike cryptdin, the proposed mature peptide region lacks the structural motif characteristic of defensins. It may have microbicidal activities.</text>
</comment>
<comment type="subcellular location">
    <subcellularLocation>
        <location>Secreted</location>
    </subcellularLocation>
</comment>
<comment type="tissue specificity">
    <text>Small bowel, spleen, colon, kidney, liver, stomach and femur marrow.</text>
</comment>
<comment type="developmental stage">
    <text>Accumulates to high levels in intestinal crypt epithelium during postnatal development.</text>
</comment>
<comment type="similarity">
    <text evidence="3">Belongs to the alpha-defensin family.</text>
</comment>